<evidence type="ECO:0000250" key="1"/>
<evidence type="ECO:0000250" key="2">
    <source>
        <dbReference type="UniProtKB" id="P31637"/>
    </source>
</evidence>
<evidence type="ECO:0000250" key="3">
    <source>
        <dbReference type="UniProtKB" id="Q9JKZ2"/>
    </source>
</evidence>
<evidence type="ECO:0000255" key="4"/>
<evidence type="ECO:0000269" key="5">
    <source>
    </source>
</evidence>
<evidence type="ECO:0000269" key="6">
    <source>
    </source>
</evidence>
<evidence type="ECO:0000269" key="7">
    <source>
    </source>
</evidence>
<evidence type="ECO:0000269" key="8">
    <source>
    </source>
</evidence>
<evidence type="ECO:0000269" key="9">
    <source>
    </source>
</evidence>
<evidence type="ECO:0000305" key="10"/>
<evidence type="ECO:0000312" key="11">
    <source>
        <dbReference type="HGNC" id="HGNC:11038"/>
    </source>
</evidence>
<evidence type="ECO:0007744" key="12">
    <source>
    </source>
</evidence>
<proteinExistence type="evidence at protein level"/>
<dbReference type="EMBL" id="L38500">
    <property type="protein sequence ID" value="AAC41747.2"/>
    <property type="molecule type" value="Genomic_DNA"/>
</dbReference>
<dbReference type="EMBL" id="AF027153">
    <property type="protein sequence ID" value="AAC39548.1"/>
    <property type="molecule type" value="Genomic_DNA"/>
</dbReference>
<dbReference type="EMBL" id="AP001719">
    <property type="status" value="NOT_ANNOTATED_CDS"/>
    <property type="molecule type" value="Genomic_DNA"/>
</dbReference>
<dbReference type="CCDS" id="CCDS33549.1"/>
<dbReference type="PIR" id="A56851">
    <property type="entry name" value="A56851"/>
</dbReference>
<dbReference type="RefSeq" id="NP_008864.4">
    <property type="nucleotide sequence ID" value="NM_006933.6"/>
</dbReference>
<dbReference type="SMR" id="P53794"/>
<dbReference type="FunCoup" id="P53794">
    <property type="interactions" value="329"/>
</dbReference>
<dbReference type="IntAct" id="P53794">
    <property type="interactions" value="37"/>
</dbReference>
<dbReference type="MINT" id="P53794"/>
<dbReference type="STRING" id="9606.ENSP00000370543"/>
<dbReference type="DrugBank" id="DB13178">
    <property type="generic name" value="Inositol"/>
</dbReference>
<dbReference type="TCDB" id="2.A.21.3.14">
    <property type="family name" value="the solute:sodium symporter (sss) family"/>
</dbReference>
<dbReference type="GlyCosmos" id="P53794">
    <property type="glycosylation" value="1 site, No reported glycans"/>
</dbReference>
<dbReference type="GlyGen" id="P53794">
    <property type="glycosylation" value="3 sites, 3 N-linked glycans (2 sites), 1 O-linked glycan (1 site)"/>
</dbReference>
<dbReference type="iPTMnet" id="P53794"/>
<dbReference type="PhosphoSitePlus" id="P53794"/>
<dbReference type="SwissPalm" id="P53794"/>
<dbReference type="BioMuta" id="SLC5A3"/>
<dbReference type="DMDM" id="3334498"/>
<dbReference type="jPOST" id="P53794"/>
<dbReference type="MassIVE" id="P53794"/>
<dbReference type="PaxDb" id="9606-ENSP00000370543"/>
<dbReference type="PeptideAtlas" id="P53794"/>
<dbReference type="ProteomicsDB" id="56620"/>
<dbReference type="Pumba" id="P53794"/>
<dbReference type="Antibodypedia" id="8029">
    <property type="antibodies" value="203 antibodies from 27 providers"/>
</dbReference>
<dbReference type="DNASU" id="6526"/>
<dbReference type="Ensembl" id="ENST00000381151.5">
    <property type="protein sequence ID" value="ENSP00000370543.3"/>
    <property type="gene ID" value="ENSG00000198743.7"/>
</dbReference>
<dbReference type="GeneID" id="6526"/>
<dbReference type="KEGG" id="hsa:6526"/>
<dbReference type="MANE-Select" id="ENST00000381151.5">
    <property type="protein sequence ID" value="ENSP00000370543.3"/>
    <property type="RefSeq nucleotide sequence ID" value="NM_006933.7"/>
    <property type="RefSeq protein sequence ID" value="NP_008864.4"/>
</dbReference>
<dbReference type="UCSC" id="uc002yto.4">
    <property type="organism name" value="human"/>
</dbReference>
<dbReference type="AGR" id="HGNC:11038"/>
<dbReference type="CTD" id="6526"/>
<dbReference type="GeneCards" id="SLC5A3"/>
<dbReference type="HGNC" id="HGNC:11038">
    <property type="gene designation" value="SLC5A3"/>
</dbReference>
<dbReference type="HPA" id="ENSG00000198743">
    <property type="expression patterns" value="Tissue enhanced (kidney, thyroid gland)"/>
</dbReference>
<dbReference type="MIM" id="600444">
    <property type="type" value="gene"/>
</dbReference>
<dbReference type="neXtProt" id="NX_P53794"/>
<dbReference type="OpenTargets" id="ENSG00000198743"/>
<dbReference type="PharmGKB" id="PA35903"/>
<dbReference type="VEuPathDB" id="HostDB:ENSG00000198743"/>
<dbReference type="eggNOG" id="KOG2349">
    <property type="taxonomic scope" value="Eukaryota"/>
</dbReference>
<dbReference type="GeneTree" id="ENSGT00940000161679"/>
<dbReference type="HOGENOM" id="CLU_018808_9_2_1"/>
<dbReference type="InParanoid" id="P53794"/>
<dbReference type="OMA" id="VGIFMFV"/>
<dbReference type="OrthoDB" id="6132759at2759"/>
<dbReference type="PAN-GO" id="P53794">
    <property type="GO annotations" value="5 GO annotations based on evolutionary models"/>
</dbReference>
<dbReference type="PhylomeDB" id="P53794"/>
<dbReference type="TreeFam" id="TF352855"/>
<dbReference type="PathwayCommons" id="P53794"/>
<dbReference type="Reactome" id="R-HSA-429593">
    <property type="pathway name" value="Inositol transporters"/>
</dbReference>
<dbReference type="SignaLink" id="P53794"/>
<dbReference type="Pharos" id="P53794">
    <property type="development level" value="Tbio"/>
</dbReference>
<dbReference type="PRO" id="PR:P53794"/>
<dbReference type="Proteomes" id="UP000005640">
    <property type="component" value="Chromosome 21"/>
</dbReference>
<dbReference type="RNAct" id="P53794">
    <property type="molecule type" value="protein"/>
</dbReference>
<dbReference type="Bgee" id="ENSG00000198743">
    <property type="expression patterns" value="Expressed in renal medulla and 210 other cell types or tissues"/>
</dbReference>
<dbReference type="GO" id="GO:0016324">
    <property type="term" value="C:apical plasma membrane"/>
    <property type="evidence" value="ECO:0007669"/>
    <property type="project" value="UniProtKB-SubCell"/>
</dbReference>
<dbReference type="GO" id="GO:0016323">
    <property type="term" value="C:basolateral plasma membrane"/>
    <property type="evidence" value="ECO:0007669"/>
    <property type="project" value="UniProtKB-SubCell"/>
</dbReference>
<dbReference type="GO" id="GO:0016020">
    <property type="term" value="C:membrane"/>
    <property type="evidence" value="ECO:0000304"/>
    <property type="project" value="ProtInc"/>
</dbReference>
<dbReference type="GO" id="GO:0048471">
    <property type="term" value="C:perinuclear region of cytoplasm"/>
    <property type="evidence" value="ECO:0000314"/>
    <property type="project" value="ARUK-UCL"/>
</dbReference>
<dbReference type="GO" id="GO:0005886">
    <property type="term" value="C:plasma membrane"/>
    <property type="evidence" value="ECO:0000314"/>
    <property type="project" value="ARUK-UCL"/>
</dbReference>
<dbReference type="GO" id="GO:0005412">
    <property type="term" value="F:D-glucose:sodium symporter activity"/>
    <property type="evidence" value="ECO:0000250"/>
    <property type="project" value="ARUK-UCL"/>
</dbReference>
<dbReference type="GO" id="GO:0015150">
    <property type="term" value="F:fucose transmembrane transporter activity"/>
    <property type="evidence" value="ECO:0000250"/>
    <property type="project" value="ARUK-UCL"/>
</dbReference>
<dbReference type="GO" id="GO:0005365">
    <property type="term" value="F:myo-inositol transmembrane transporter activity"/>
    <property type="evidence" value="ECO:0000250"/>
    <property type="project" value="ARUK-UCL"/>
</dbReference>
<dbReference type="GO" id="GO:0005367">
    <property type="term" value="F:myo-inositol:sodium symporter activity"/>
    <property type="evidence" value="ECO:0000314"/>
    <property type="project" value="UniProtKB"/>
</dbReference>
<dbReference type="GO" id="GO:0015146">
    <property type="term" value="F:pentose transmembrane transporter activity"/>
    <property type="evidence" value="ECO:0000250"/>
    <property type="project" value="ARUK-UCL"/>
</dbReference>
<dbReference type="GO" id="GO:0015166">
    <property type="term" value="F:polyol transmembrane transporter activity"/>
    <property type="evidence" value="ECO:0000250"/>
    <property type="project" value="ARUK-UCL"/>
</dbReference>
<dbReference type="GO" id="GO:0015459">
    <property type="term" value="F:potassium channel regulator activity"/>
    <property type="evidence" value="ECO:0000314"/>
    <property type="project" value="ARUK-UCL"/>
</dbReference>
<dbReference type="GO" id="GO:0044325">
    <property type="term" value="F:transmembrane transporter binding"/>
    <property type="evidence" value="ECO:0000353"/>
    <property type="project" value="ARUK-UCL"/>
</dbReference>
<dbReference type="GO" id="GO:1904659">
    <property type="term" value="P:D-glucose transmembrane transport"/>
    <property type="evidence" value="ECO:0000250"/>
    <property type="project" value="ARUK-UCL"/>
</dbReference>
<dbReference type="GO" id="GO:0015756">
    <property type="term" value="P:fucose transmembrane transport"/>
    <property type="evidence" value="ECO:0000250"/>
    <property type="project" value="ARUK-UCL"/>
</dbReference>
<dbReference type="GO" id="GO:0006020">
    <property type="term" value="P:inositol metabolic process"/>
    <property type="evidence" value="ECO:0000318"/>
    <property type="project" value="GO_Central"/>
</dbReference>
<dbReference type="GO" id="GO:1904679">
    <property type="term" value="P:myo-inositol import across plasma membrane"/>
    <property type="evidence" value="ECO:0000250"/>
    <property type="project" value="ARUK-UCL"/>
</dbReference>
<dbReference type="GO" id="GO:0015798">
    <property type="term" value="P:myo-inositol transport"/>
    <property type="evidence" value="ECO:0000250"/>
    <property type="project" value="ARUK-UCL"/>
</dbReference>
<dbReference type="GO" id="GO:0015750">
    <property type="term" value="P:pentose transmembrane transport"/>
    <property type="evidence" value="ECO:0000250"/>
    <property type="project" value="ARUK-UCL"/>
</dbReference>
<dbReference type="GO" id="GO:0015791">
    <property type="term" value="P:polyol transmembrane transport"/>
    <property type="evidence" value="ECO:0000250"/>
    <property type="project" value="ARUK-UCL"/>
</dbReference>
<dbReference type="GO" id="GO:1905477">
    <property type="term" value="P:positive regulation of protein localization to membrane"/>
    <property type="evidence" value="ECO:0000250"/>
    <property type="project" value="ARUK-UCL"/>
</dbReference>
<dbReference type="GO" id="GO:1903428">
    <property type="term" value="P:positive regulation of reactive oxygen species biosynthetic process"/>
    <property type="evidence" value="ECO:0000250"/>
    <property type="project" value="ARUK-UCL"/>
</dbReference>
<dbReference type="GO" id="GO:0150104">
    <property type="term" value="P:transport across blood-brain barrier"/>
    <property type="evidence" value="ECO:0000303"/>
    <property type="project" value="ARUK-UCL"/>
</dbReference>
<dbReference type="CDD" id="cd11491">
    <property type="entry name" value="SLC5sbd_SMIT"/>
    <property type="match status" value="1"/>
</dbReference>
<dbReference type="FunFam" id="1.20.1730.10:FF:000013">
    <property type="entry name" value="sodium/myo-inositol cotransporter isoform X1"/>
    <property type="match status" value="1"/>
</dbReference>
<dbReference type="Gene3D" id="1.20.1730.10">
    <property type="entry name" value="Sodium/glucose cotransporter"/>
    <property type="match status" value="1"/>
</dbReference>
<dbReference type="InterPro" id="IPR038377">
    <property type="entry name" value="Na/Glc_symporter_sf"/>
</dbReference>
<dbReference type="InterPro" id="IPR001734">
    <property type="entry name" value="Na/solute_symporter"/>
</dbReference>
<dbReference type="InterPro" id="IPR018212">
    <property type="entry name" value="Na/solute_symporter_CS"/>
</dbReference>
<dbReference type="InterPro" id="IPR042731">
    <property type="entry name" value="SMIT"/>
</dbReference>
<dbReference type="NCBIfam" id="TIGR00813">
    <property type="entry name" value="sss"/>
    <property type="match status" value="1"/>
</dbReference>
<dbReference type="PANTHER" id="PTHR11819:SF150">
    <property type="entry name" value="SODIUM_MYO-INOSITOL COTRANSPORTER"/>
    <property type="match status" value="1"/>
</dbReference>
<dbReference type="PANTHER" id="PTHR11819">
    <property type="entry name" value="SOLUTE CARRIER FAMILY 5"/>
    <property type="match status" value="1"/>
</dbReference>
<dbReference type="Pfam" id="PF00474">
    <property type="entry name" value="SSF"/>
    <property type="match status" value="1"/>
</dbReference>
<dbReference type="PROSITE" id="PS00456">
    <property type="entry name" value="NA_SOLUT_SYMP_1"/>
    <property type="match status" value="1"/>
</dbReference>
<dbReference type="PROSITE" id="PS00457">
    <property type="entry name" value="NA_SOLUT_SYMP_2"/>
    <property type="match status" value="1"/>
</dbReference>
<dbReference type="PROSITE" id="PS50283">
    <property type="entry name" value="NA_SOLUT_SYMP_3"/>
    <property type="match status" value="1"/>
</dbReference>
<accession>P53794</accession>
<accession>O43489</accession>
<gene>
    <name evidence="11" type="primary">SLC5A3</name>
</gene>
<reference key="1">
    <citation type="journal article" date="1995" name="Genomics">
        <title>The human osmoregulatory Na+/myo-inositol cotransporter gene (SLC5A3): molecular cloning and localization to chromosome 21.</title>
        <authorList>
            <person name="Berry G.T."/>
            <person name="Mallee J.J."/>
            <person name="Kwon H.M."/>
            <person name="Rim J.S."/>
            <person name="Mulla W.R."/>
            <person name="Muenke M."/>
            <person name="Spinner N.B."/>
        </authorList>
    </citation>
    <scope>NUCLEOTIDE SEQUENCE [GENOMIC DNA]</scope>
    <source>
        <tissue>Placenta</tissue>
    </source>
</reference>
<reference key="2">
    <citation type="submission" date="2004-04" db="EMBL/GenBank/DDBJ databases">
        <authorList>
            <person name="Berry G.T."/>
            <person name="Mallee J.J."/>
            <person name="Kwon H.M."/>
            <person name="Rim J.S."/>
            <person name="Mulla W.R."/>
            <person name="Muenke M."/>
            <person name="Spinner N.B."/>
        </authorList>
    </citation>
    <scope>SEQUENCE REVISION TO 50 AND 566</scope>
</reference>
<reference key="3">
    <citation type="journal article" date="1997" name="Genomics">
        <title>The structural organization of the human Na+/myo-inositol cotransporter (SLC5A3) gene and characterization of the promoter.</title>
        <authorList>
            <person name="Mallee J.J."/>
            <person name="Atta M.G."/>
            <person name="Lorica V."/>
            <person name="Rim J.S."/>
            <person name="Kwon H.M."/>
            <person name="Lucente A.D."/>
            <person name="Wang Y."/>
            <person name="Berry G.T."/>
        </authorList>
    </citation>
    <scope>NUCLEOTIDE SEQUENCE [GENOMIC DNA]</scope>
    <scope>VARIANTS THR-50 AND GLN-566</scope>
</reference>
<reference key="4">
    <citation type="journal article" date="2000" name="Nature">
        <title>The DNA sequence of human chromosome 21.</title>
        <authorList>
            <person name="Hattori M."/>
            <person name="Fujiyama A."/>
            <person name="Taylor T.D."/>
            <person name="Watanabe H."/>
            <person name="Yada T."/>
            <person name="Park H.-S."/>
            <person name="Toyoda A."/>
            <person name="Ishii K."/>
            <person name="Totoki Y."/>
            <person name="Choi D.-K."/>
            <person name="Groner Y."/>
            <person name="Soeda E."/>
            <person name="Ohki M."/>
            <person name="Takagi T."/>
            <person name="Sakaki Y."/>
            <person name="Taudien S."/>
            <person name="Blechschmidt K."/>
            <person name="Polley A."/>
            <person name="Menzel U."/>
            <person name="Delabar J."/>
            <person name="Kumpf K."/>
            <person name="Lehmann R."/>
            <person name="Patterson D."/>
            <person name="Reichwald K."/>
            <person name="Rump A."/>
            <person name="Schillhabel M."/>
            <person name="Schudy A."/>
            <person name="Zimmermann W."/>
            <person name="Rosenthal A."/>
            <person name="Kudoh J."/>
            <person name="Shibuya K."/>
            <person name="Kawasaki K."/>
            <person name="Asakawa S."/>
            <person name="Shintani A."/>
            <person name="Sasaki T."/>
            <person name="Nagamine K."/>
            <person name="Mitsuyama S."/>
            <person name="Antonarakis S.E."/>
            <person name="Minoshima S."/>
            <person name="Shimizu N."/>
            <person name="Nordsiek G."/>
            <person name="Hornischer K."/>
            <person name="Brandt P."/>
            <person name="Scharfe M."/>
            <person name="Schoen O."/>
            <person name="Desario A."/>
            <person name="Reichelt J."/>
            <person name="Kauer G."/>
            <person name="Bloecker H."/>
            <person name="Ramser J."/>
            <person name="Beck A."/>
            <person name="Klages S."/>
            <person name="Hennig S."/>
            <person name="Riesselmann L."/>
            <person name="Dagand E."/>
            <person name="Wehrmeyer S."/>
            <person name="Borzym K."/>
            <person name="Gardiner K."/>
            <person name="Nizetic D."/>
            <person name="Francis F."/>
            <person name="Lehrach H."/>
            <person name="Reinhardt R."/>
            <person name="Yaspo M.-L."/>
        </authorList>
    </citation>
    <scope>NUCLEOTIDE SEQUENCE [LARGE SCALE GENOMIC DNA]</scope>
</reference>
<reference key="5">
    <citation type="journal article" date="2011" name="Biochem. Biophys. Res. Commun.">
        <title>H+/myo-inositol transporter genes, hmit-1.1 and hmit-1.2, have roles in the osmoprotective response in Caenorhabditis elegans.</title>
        <authorList>
            <person name="Kage-Nakadai E."/>
            <person name="Uehara T."/>
            <person name="Mitani S."/>
        </authorList>
    </citation>
    <scope>INDUCTION</scope>
</reference>
<reference key="6">
    <citation type="journal article" date="2013" name="J. Proteome Res.">
        <title>Toward a comprehensive characterization of a human cancer cell phosphoproteome.</title>
        <authorList>
            <person name="Zhou H."/>
            <person name="Di Palma S."/>
            <person name="Preisinger C."/>
            <person name="Peng M."/>
            <person name="Polat A.N."/>
            <person name="Heck A.J."/>
            <person name="Mohammed S."/>
        </authorList>
    </citation>
    <scope>PHOSPHORYLATION [LARGE SCALE ANALYSIS] AT SER-594 AND SER-632</scope>
    <scope>IDENTIFICATION BY MASS SPECTROMETRY [LARGE SCALE ANALYSIS]</scope>
    <source>
        <tissue>Cervix carcinoma</tissue>
        <tissue>Erythroleukemia</tissue>
    </source>
</reference>
<reference key="7">
    <citation type="journal article" date="2014" name="Sci. Signal.">
        <title>KCNQ1, KCNE2, and Na+-coupled solute transporters form reciprocally regulating complexes that affect neuronal excitability.</title>
        <authorList>
            <person name="Abbott G.W."/>
            <person name="Tai K.K."/>
            <person name="Neverisky D.L."/>
            <person name="Hansler A."/>
            <person name="Hu Z."/>
            <person name="Roepke T.K."/>
            <person name="Lerner D.J."/>
            <person name="Chen Q."/>
            <person name="Liu L."/>
            <person name="Zupan B."/>
            <person name="Toth M."/>
            <person name="Haynes R."/>
            <person name="Huang X."/>
            <person name="Demirbas D."/>
            <person name="Buccafusca R."/>
            <person name="Gross S.S."/>
            <person name="Kanda V.A."/>
            <person name="Berry G.T."/>
        </authorList>
    </citation>
    <scope>FUNCTION</scope>
    <scope>TRANSPORT ACTIVITY</scope>
    <scope>INTERACTION WITH KCNQ1</scope>
</reference>
<reference key="8">
    <citation type="journal article" date="2016" name="Proc. Natl. Acad. Sci. U.S.A.">
        <title>Osmoregulatory inositol transporter SMIT1 modulates electrical activity by adjusting PI(4,5)P2 levels.</title>
        <authorList>
            <person name="Dai G."/>
            <person name="Yu H."/>
            <person name="Kruse M."/>
            <person name="Traynor-Kaplan A."/>
            <person name="Hille B."/>
        </authorList>
    </citation>
    <scope>FUNCTION</scope>
    <scope>INDUCTION</scope>
</reference>
<reference key="9">
    <citation type="journal article" date="2017" name="Biophys. J.">
        <title>SMIT1 Modifies KCNQ Channel Function and Pharmacology by Physical Interaction with the Pore.</title>
        <authorList>
            <person name="Manville R.W."/>
            <person name="Neverisky D.L."/>
            <person name="Abbott G.W."/>
        </authorList>
    </citation>
    <scope>FUNCTION</scope>
    <scope>INTERACTION WITH KCNQ2</scope>
</reference>
<organism>
    <name type="scientific">Homo sapiens</name>
    <name type="common">Human</name>
    <dbReference type="NCBI Taxonomy" id="9606"/>
    <lineage>
        <taxon>Eukaryota</taxon>
        <taxon>Metazoa</taxon>
        <taxon>Chordata</taxon>
        <taxon>Craniata</taxon>
        <taxon>Vertebrata</taxon>
        <taxon>Euteleostomi</taxon>
        <taxon>Mammalia</taxon>
        <taxon>Eutheria</taxon>
        <taxon>Euarchontoglires</taxon>
        <taxon>Primates</taxon>
        <taxon>Haplorrhini</taxon>
        <taxon>Catarrhini</taxon>
        <taxon>Hominidae</taxon>
        <taxon>Homo</taxon>
    </lineage>
</organism>
<feature type="chain" id="PRO_0000105381" description="Sodium/myo-inositol cotransporter">
    <location>
        <begin position="1"/>
        <end position="718"/>
    </location>
</feature>
<feature type="topological domain" description="Extracellular" evidence="4">
    <location>
        <begin position="1"/>
        <end position="9"/>
    </location>
</feature>
<feature type="transmembrane region" description="Helical" evidence="4">
    <location>
        <begin position="10"/>
        <end position="29"/>
    </location>
</feature>
<feature type="topological domain" description="Cytoplasmic" evidence="4">
    <location>
        <begin position="30"/>
        <end position="38"/>
    </location>
</feature>
<feature type="transmembrane region" description="Helical" evidence="4">
    <location>
        <begin position="39"/>
        <end position="57"/>
    </location>
</feature>
<feature type="topological domain" description="Extracellular" evidence="4">
    <location>
        <begin position="58"/>
        <end position="86"/>
    </location>
</feature>
<feature type="transmembrane region" description="Helical" evidence="4">
    <location>
        <begin position="87"/>
        <end position="110"/>
    </location>
</feature>
<feature type="topological domain" description="Cytoplasmic" evidence="4">
    <location>
        <begin position="111"/>
        <end position="123"/>
    </location>
</feature>
<feature type="transmembrane region" description="Helical" evidence="4">
    <location>
        <begin position="124"/>
        <end position="144"/>
    </location>
</feature>
<feature type="topological domain" description="Extracellular" evidence="4">
    <location>
        <begin position="145"/>
        <end position="157"/>
    </location>
</feature>
<feature type="transmembrane region" description="Helical" evidence="4">
    <location>
        <begin position="158"/>
        <end position="183"/>
    </location>
</feature>
<feature type="topological domain" description="Cytoplasmic" evidence="4">
    <location>
        <begin position="184"/>
        <end position="186"/>
    </location>
</feature>
<feature type="transmembrane region" description="Helical" evidence="4">
    <location>
        <begin position="187"/>
        <end position="205"/>
    </location>
</feature>
<feature type="topological domain" description="Extracellular" evidence="4">
    <location>
        <begin position="206"/>
        <end position="303"/>
    </location>
</feature>
<feature type="transmembrane region" description="Helical" evidence="4">
    <location>
        <begin position="304"/>
        <end position="324"/>
    </location>
</feature>
<feature type="topological domain" description="Cytoplasmic" evidence="4">
    <location>
        <begin position="325"/>
        <end position="353"/>
    </location>
</feature>
<feature type="transmembrane region" description="Helical" evidence="4">
    <location>
        <begin position="354"/>
        <end position="376"/>
    </location>
</feature>
<feature type="topological domain" description="Extracellular" evidence="4">
    <location>
        <begin position="377"/>
        <end position="406"/>
    </location>
</feature>
<feature type="transmembrane region" description="Helical" evidence="4">
    <location>
        <begin position="407"/>
        <end position="430"/>
    </location>
</feature>
<feature type="topological domain" description="Cytoplasmic" evidence="4">
    <location>
        <begin position="431"/>
        <end position="443"/>
    </location>
</feature>
<feature type="transmembrane region" description="Helical" evidence="4">
    <location>
        <begin position="444"/>
        <end position="462"/>
    </location>
</feature>
<feature type="topological domain" description="Extracellular" evidence="4">
    <location>
        <begin position="463"/>
        <end position="510"/>
    </location>
</feature>
<feature type="transmembrane region" description="Helical" evidence="4">
    <location>
        <begin position="511"/>
        <end position="532"/>
    </location>
</feature>
<feature type="topological domain" description="Cytoplasmic" evidence="4">
    <location>
        <begin position="533"/>
        <end position="695"/>
    </location>
</feature>
<feature type="transmembrane region" description="Helical" evidence="4">
    <location>
        <begin position="696"/>
        <end position="716"/>
    </location>
</feature>
<feature type="topological domain" description="Extracellular" evidence="4">
    <location>
        <begin position="717"/>
        <end position="718"/>
    </location>
</feature>
<feature type="site" description="Implicated in sodium coupling" evidence="1">
    <location>
        <position position="24"/>
    </location>
</feature>
<feature type="site" description="Implicated in sodium coupling" evidence="1">
    <location>
        <position position="285"/>
    </location>
</feature>
<feature type="modified residue" description="Phosphoserine" evidence="12">
    <location>
        <position position="594"/>
    </location>
</feature>
<feature type="modified residue" description="Phosphoserine" evidence="12">
    <location>
        <position position="632"/>
    </location>
</feature>
<feature type="glycosylation site" description="N-linked (GlcNAc...) asparagine" evidence="4">
    <location>
        <position position="232"/>
    </location>
</feature>
<feature type="sequence variant" id="VAR_061875" description="In dbSNP:rs8129891." evidence="9">
    <original>A</original>
    <variation>T</variation>
    <location>
        <position position="50"/>
    </location>
</feature>
<feature type="sequence variant" id="VAR_061876" description="In dbSNP:rs4817617." evidence="9">
    <original>K</original>
    <variation>Q</variation>
    <location>
        <position position="566"/>
    </location>
</feature>
<feature type="sequence conflict" description="In Ref. 1; AAC41747." evidence="10" ref="1">
    <original>S</original>
    <variation>C</variation>
    <location>
        <position position="31"/>
    </location>
</feature>
<comment type="function">
    <text evidence="2 3 6 7 8">Electrogenic Na(+)-coupled sugar symporter that actively transports myo-inositol and its stereoisomer scyllo-inositol across the plasma membrane, with a Na(+) to sugar coupling ratio of 2:1 (By similarity). Maintains myo-inositol concentration gradient that defines cell volume and fluid balance during osmotic stress, in particular in the fetoplacental unit and central nervous system (By similarity). Forms coregulatory complexes with voltage-gated K(+) ion channels, allosterically altering ion selectivity, voltage dependence and gating kinetics of the channel. In turn, K(+) efflux through the channel forms a local electrical gradient that modulates electrogenic Na(+)-coupled myo-inositol influx through the transporter (PubMed:24595108, PubMed:28793216). Associates with KCNQ1-KCNE2 channel in the apical membrane of choroid plexus epithelium and regulates the myo-inositol gradient between blood and cerebrospinal fluid with an impact on neuron excitability (By similarity) (PubMed:24595108). Associates with KCNQ2-KCNQ3 channel altering ion selectivity, increasing Na(+) and Cs(+) permeation relative to K(+) permeation (PubMed:28793216). Provides myo-inositol precursor for biosynthesis of phosphoinositides such as PI(4,5)P2, thus indirectly affecting the activity of phosphoinositide-dependent ion channels and Ca(2+) signaling upon osmotic stress (PubMed:27217553).</text>
</comment>
<comment type="catalytic activity">
    <reaction evidence="2 6">
        <text>myo-inositol(out) + 2 Na(+)(out) = myo-inositol(in) + 2 Na(+)(in)</text>
        <dbReference type="Rhea" id="RHEA:72987"/>
        <dbReference type="ChEBI" id="CHEBI:17268"/>
        <dbReference type="ChEBI" id="CHEBI:29101"/>
    </reaction>
</comment>
<comment type="catalytic activity">
    <reaction evidence="2">
        <text>scyllo-inositol(out) + 2 Na(+)(out) = scyllo-inositol(in) + 2 Na(+)(in)</text>
        <dbReference type="Rhea" id="RHEA:72991"/>
        <dbReference type="ChEBI" id="CHEBI:10642"/>
        <dbReference type="ChEBI" id="CHEBI:29101"/>
    </reaction>
</comment>
<comment type="subunit">
    <text evidence="6 8">Interacts with KCNQ2 (via the pore module) (PubMed:28793216). Interacts with KCNQ1; this interaction is direct (PubMed:24595108). Forms coregulatory complexes with ion channels KCNQ2-KCNQ3 and KCNQ1-KCNE2 (PubMed:24595108, PubMed:28793216).</text>
</comment>
<comment type="subcellular location">
    <subcellularLocation>
        <location evidence="3">Apical cell membrane</location>
        <topology evidence="4">Multi-pass membrane protein</topology>
    </subcellularLocation>
    <subcellularLocation>
        <location evidence="3">Basolateral cell membrane</location>
        <topology evidence="4">Multi-pass membrane protein</topology>
    </subcellularLocation>
    <text evidence="3">Colocalizes with KCNQ1 at the apical membrane of choroid plexus epithelium.</text>
</comment>
<comment type="induction">
    <text evidence="5 7">Induced by hyperosmotic stress.</text>
</comment>
<comment type="similarity">
    <text evidence="10">Belongs to the sodium:solute symporter (SSF) (TC 2.A.21) family.</text>
</comment>
<protein>
    <recommendedName>
        <fullName evidence="10">Sodium/myo-inositol cotransporter</fullName>
        <shortName>Na(+)/myo-inositol cotransporter</shortName>
    </recommendedName>
    <alternativeName>
        <fullName>Sodium/myo-inositol transporter 1</fullName>
        <shortName>SMIT1</shortName>
    </alternativeName>
    <alternativeName>
        <fullName>Solute carrier family 5 member 3</fullName>
    </alternativeName>
</protein>
<name>SC5A3_HUMAN</name>
<keyword id="KW-1003">Cell membrane</keyword>
<keyword id="KW-0325">Glycoprotein</keyword>
<keyword id="KW-0406">Ion transport</keyword>
<keyword id="KW-0472">Membrane</keyword>
<keyword id="KW-0597">Phosphoprotein</keyword>
<keyword id="KW-1267">Proteomics identification</keyword>
<keyword id="KW-1185">Reference proteome</keyword>
<keyword id="KW-0915">Sodium</keyword>
<keyword id="KW-0739">Sodium transport</keyword>
<keyword id="KW-0769">Symport</keyword>
<keyword id="KW-0812">Transmembrane</keyword>
<keyword id="KW-1133">Transmembrane helix</keyword>
<keyword id="KW-0813">Transport</keyword>
<sequence length="718" mass="79664">MRAVLDTADIAIVALYFILVMCIGFFAMWKSNRSTVSGYFLAGRSMTWVAIGASLFVSNIGSEHFIGLAGSGAASGFAVGAWEFNALLLLQLLGWVFIPIYIRSGVYTMPEYLSKRFGGHRIQVYFAALSLILYIFTKLSVDLYSGALFIQESLGWNLYVSVILLIGMTALLTVTGGLVAVIYTDTLQALLMIIGALTLMIISIMEIGGFEEVKRRYMLASPDVTSILLTYNLSNTNSCNVSPKKEALKMLRNPTDEDVPWPGFILGQTPASVWYWCADQVIVQRVLAAKNIAHAKGSTLMAGFLKLLPMFIIVVPGMISRILFTDDIACINPEHCMLVCGSRAGCSNIAYPRLVMKLVPVGLRGLMMAVMIAALMSDLDSIFNSASTIFTLDVYKLIRKSASSRELMIVGRIFVAFMVVISIAWVPIIVEMQGGQMYLYIQEVADYLTPPVAALFLLAIFWKRCNEQGAFYGGMAGFVLGAVRLILAFAYRAPECDQPDNRPGFIKDIHYMYVATGLFWVTGLITVIVSLLTPPPTKEQIRTTTFWSKKNLVVKENCSPKEEPYKMQEKSILRCSENNETINHIIPNGKSEDSIKGLQPEDVNLLVTCREEGNPVASLGHSEAETPVDAYSNGQAALMGEKERKKETDDGGRYWKFIDWFCGFKSKSLSKRSLRDLMEEEAVCLQMLEETRQVKVILNIGLFAVCSLGIFMFVYFSL</sequence>